<name>RL25_ECOL5</name>
<dbReference type="EMBL" id="CP000247">
    <property type="protein sequence ID" value="ABG70225.1"/>
    <property type="molecule type" value="Genomic_DNA"/>
</dbReference>
<dbReference type="RefSeq" id="WP_000494186.1">
    <property type="nucleotide sequence ID" value="NC_008253.1"/>
</dbReference>
<dbReference type="SMR" id="Q0TFQ4"/>
<dbReference type="KEGG" id="ecp:ECP_2226"/>
<dbReference type="HOGENOM" id="CLU_137946_0_0_6"/>
<dbReference type="Proteomes" id="UP000009182">
    <property type="component" value="Chromosome"/>
</dbReference>
<dbReference type="GO" id="GO:0022625">
    <property type="term" value="C:cytosolic large ribosomal subunit"/>
    <property type="evidence" value="ECO:0007669"/>
    <property type="project" value="TreeGrafter"/>
</dbReference>
<dbReference type="GO" id="GO:0008097">
    <property type="term" value="F:5S rRNA binding"/>
    <property type="evidence" value="ECO:0007669"/>
    <property type="project" value="InterPro"/>
</dbReference>
<dbReference type="GO" id="GO:0003735">
    <property type="term" value="F:structural constituent of ribosome"/>
    <property type="evidence" value="ECO:0007669"/>
    <property type="project" value="InterPro"/>
</dbReference>
<dbReference type="GO" id="GO:0006412">
    <property type="term" value="P:translation"/>
    <property type="evidence" value="ECO:0007669"/>
    <property type="project" value="UniProtKB-UniRule"/>
</dbReference>
<dbReference type="CDD" id="cd00495">
    <property type="entry name" value="Ribosomal_L25_TL5_CTC"/>
    <property type="match status" value="1"/>
</dbReference>
<dbReference type="FunFam" id="2.40.240.10:FF:000002">
    <property type="entry name" value="50S ribosomal protein L25"/>
    <property type="match status" value="1"/>
</dbReference>
<dbReference type="Gene3D" id="2.40.240.10">
    <property type="entry name" value="Ribosomal Protein L25, Chain P"/>
    <property type="match status" value="1"/>
</dbReference>
<dbReference type="HAMAP" id="MF_01336">
    <property type="entry name" value="Ribosomal_bL25"/>
    <property type="match status" value="1"/>
</dbReference>
<dbReference type="InterPro" id="IPR020056">
    <property type="entry name" value="Rbsml_bL25/Gln-tRNA_synth_N"/>
</dbReference>
<dbReference type="InterPro" id="IPR011035">
    <property type="entry name" value="Ribosomal_bL25/Gln-tRNA_synth"/>
</dbReference>
<dbReference type="InterPro" id="IPR020055">
    <property type="entry name" value="Ribosomal_bL25_short"/>
</dbReference>
<dbReference type="InterPro" id="IPR029751">
    <property type="entry name" value="Ribosomal_L25_dom"/>
</dbReference>
<dbReference type="InterPro" id="IPR020930">
    <property type="entry name" value="Ribosomal_uL5_bac-type"/>
</dbReference>
<dbReference type="NCBIfam" id="NF004612">
    <property type="entry name" value="PRK05943.1"/>
    <property type="match status" value="1"/>
</dbReference>
<dbReference type="PANTHER" id="PTHR33284">
    <property type="entry name" value="RIBOSOMAL PROTEIN L25/GLN-TRNA SYNTHETASE, ANTI-CODON-BINDING DOMAIN-CONTAINING PROTEIN"/>
    <property type="match status" value="1"/>
</dbReference>
<dbReference type="PANTHER" id="PTHR33284:SF1">
    <property type="entry name" value="RIBOSOMAL PROTEIN L25_GLN-TRNA SYNTHETASE, ANTI-CODON-BINDING DOMAIN-CONTAINING PROTEIN"/>
    <property type="match status" value="1"/>
</dbReference>
<dbReference type="Pfam" id="PF01386">
    <property type="entry name" value="Ribosomal_L25p"/>
    <property type="match status" value="1"/>
</dbReference>
<dbReference type="SUPFAM" id="SSF50715">
    <property type="entry name" value="Ribosomal protein L25-like"/>
    <property type="match status" value="1"/>
</dbReference>
<keyword id="KW-0687">Ribonucleoprotein</keyword>
<keyword id="KW-0689">Ribosomal protein</keyword>
<keyword id="KW-0694">RNA-binding</keyword>
<keyword id="KW-0699">rRNA-binding</keyword>
<accession>Q0TFQ4</accession>
<evidence type="ECO:0000255" key="1">
    <source>
        <dbReference type="HAMAP-Rule" id="MF_01336"/>
    </source>
</evidence>
<evidence type="ECO:0000305" key="2"/>
<sequence length="94" mass="10692">MFTINAEVRKEQGKGASRRLRAANKFPAIIYGGKEAPLAVELDHDKVMNMQVKAEFYSEVLTIVVDGKEIKVKAQDVQRHPYKPKLLHIDFVRA</sequence>
<comment type="function">
    <text evidence="1">This is one of the proteins that binds to the 5S RNA in the ribosome where it forms part of the central protuberance.</text>
</comment>
<comment type="subunit">
    <text evidence="1">Part of the 50S ribosomal subunit; part of the 5S rRNA/L5/L18/L25 subcomplex. Contacts the 5S rRNA. Binds to the 5S rRNA independently of L5 and L18.</text>
</comment>
<comment type="similarity">
    <text evidence="1">Belongs to the bacterial ribosomal protein bL25 family.</text>
</comment>
<proteinExistence type="inferred from homology"/>
<feature type="chain" id="PRO_1000052950" description="Large ribosomal subunit protein bL25">
    <location>
        <begin position="1"/>
        <end position="94"/>
    </location>
</feature>
<protein>
    <recommendedName>
        <fullName evidence="1">Large ribosomal subunit protein bL25</fullName>
    </recommendedName>
    <alternativeName>
        <fullName evidence="2">50S ribosomal protein L25</fullName>
    </alternativeName>
</protein>
<organism>
    <name type="scientific">Escherichia coli O6:K15:H31 (strain 536 / UPEC)</name>
    <dbReference type="NCBI Taxonomy" id="362663"/>
    <lineage>
        <taxon>Bacteria</taxon>
        <taxon>Pseudomonadati</taxon>
        <taxon>Pseudomonadota</taxon>
        <taxon>Gammaproteobacteria</taxon>
        <taxon>Enterobacterales</taxon>
        <taxon>Enterobacteriaceae</taxon>
        <taxon>Escherichia</taxon>
    </lineage>
</organism>
<reference key="1">
    <citation type="journal article" date="2006" name="Mol. Microbiol.">
        <title>Role of pathogenicity island-associated integrases in the genome plasticity of uropathogenic Escherichia coli strain 536.</title>
        <authorList>
            <person name="Hochhut B."/>
            <person name="Wilde C."/>
            <person name="Balling G."/>
            <person name="Middendorf B."/>
            <person name="Dobrindt U."/>
            <person name="Brzuszkiewicz E."/>
            <person name="Gottschalk G."/>
            <person name="Carniel E."/>
            <person name="Hacker J."/>
        </authorList>
    </citation>
    <scope>NUCLEOTIDE SEQUENCE [LARGE SCALE GENOMIC DNA]</scope>
    <source>
        <strain>536 / UPEC</strain>
    </source>
</reference>
<gene>
    <name evidence="1" type="primary">rplY</name>
    <name type="ordered locus">ECP_2226</name>
</gene>